<keyword id="KW-1185">Reference proteome</keyword>
<keyword id="KW-0687">Ribonucleoprotein</keyword>
<keyword id="KW-0689">Ribosomal protein</keyword>
<keyword id="KW-0694">RNA-binding</keyword>
<keyword id="KW-0699">rRNA-binding</keyword>
<protein>
    <recommendedName>
        <fullName evidence="1">Small ribosomal subunit protein bS18</fullName>
    </recommendedName>
    <alternativeName>
        <fullName evidence="2">30S ribosomal protein S18</fullName>
    </alternativeName>
</protein>
<reference key="1">
    <citation type="journal article" date="2005" name="Proc. Natl. Acad. Sci. U.S.A.">
        <title>Whole genome sequence of Staphylococcus saprophyticus reveals the pathogenesis of uncomplicated urinary tract infection.</title>
        <authorList>
            <person name="Kuroda M."/>
            <person name="Yamashita A."/>
            <person name="Hirakawa H."/>
            <person name="Kumano M."/>
            <person name="Morikawa K."/>
            <person name="Higashide M."/>
            <person name="Maruyama A."/>
            <person name="Inose Y."/>
            <person name="Matoba K."/>
            <person name="Toh H."/>
            <person name="Kuhara S."/>
            <person name="Hattori M."/>
            <person name="Ohta T."/>
        </authorList>
    </citation>
    <scope>NUCLEOTIDE SEQUENCE [LARGE SCALE GENOMIC DNA]</scope>
    <source>
        <strain>ATCC 15305 / DSM 20229 / NCIMB 8711 / NCTC 7292 / S-41</strain>
    </source>
</reference>
<gene>
    <name evidence="1" type="primary">rpsR</name>
    <name type="ordered locus">SSP2371</name>
</gene>
<dbReference type="EMBL" id="AP008934">
    <property type="protein sequence ID" value="BAE19516.1"/>
    <property type="molecule type" value="Genomic_DNA"/>
</dbReference>
<dbReference type="RefSeq" id="WP_002484306.1">
    <property type="nucleotide sequence ID" value="NZ_MTGA01000035.1"/>
</dbReference>
<dbReference type="SMR" id="Q49UQ2"/>
<dbReference type="GeneID" id="97229207"/>
<dbReference type="KEGG" id="ssp:SSP2371"/>
<dbReference type="eggNOG" id="COG0238">
    <property type="taxonomic scope" value="Bacteria"/>
</dbReference>
<dbReference type="HOGENOM" id="CLU_148710_2_2_9"/>
<dbReference type="OrthoDB" id="9812008at2"/>
<dbReference type="Proteomes" id="UP000006371">
    <property type="component" value="Chromosome"/>
</dbReference>
<dbReference type="GO" id="GO:0022627">
    <property type="term" value="C:cytosolic small ribosomal subunit"/>
    <property type="evidence" value="ECO:0007669"/>
    <property type="project" value="TreeGrafter"/>
</dbReference>
<dbReference type="GO" id="GO:0070181">
    <property type="term" value="F:small ribosomal subunit rRNA binding"/>
    <property type="evidence" value="ECO:0007669"/>
    <property type="project" value="TreeGrafter"/>
</dbReference>
<dbReference type="GO" id="GO:0003735">
    <property type="term" value="F:structural constituent of ribosome"/>
    <property type="evidence" value="ECO:0007669"/>
    <property type="project" value="InterPro"/>
</dbReference>
<dbReference type="GO" id="GO:0006412">
    <property type="term" value="P:translation"/>
    <property type="evidence" value="ECO:0007669"/>
    <property type="project" value="UniProtKB-UniRule"/>
</dbReference>
<dbReference type="FunFam" id="4.10.640.10:FF:000003">
    <property type="entry name" value="30S ribosomal protein S18"/>
    <property type="match status" value="1"/>
</dbReference>
<dbReference type="Gene3D" id="4.10.640.10">
    <property type="entry name" value="Ribosomal protein S18"/>
    <property type="match status" value="1"/>
</dbReference>
<dbReference type="HAMAP" id="MF_00270">
    <property type="entry name" value="Ribosomal_bS18"/>
    <property type="match status" value="1"/>
</dbReference>
<dbReference type="InterPro" id="IPR001648">
    <property type="entry name" value="Ribosomal_bS18"/>
</dbReference>
<dbReference type="InterPro" id="IPR018275">
    <property type="entry name" value="Ribosomal_bS18_CS"/>
</dbReference>
<dbReference type="InterPro" id="IPR036870">
    <property type="entry name" value="Ribosomal_bS18_sf"/>
</dbReference>
<dbReference type="NCBIfam" id="TIGR00165">
    <property type="entry name" value="S18"/>
    <property type="match status" value="1"/>
</dbReference>
<dbReference type="PANTHER" id="PTHR13479">
    <property type="entry name" value="30S RIBOSOMAL PROTEIN S18"/>
    <property type="match status" value="1"/>
</dbReference>
<dbReference type="PANTHER" id="PTHR13479:SF40">
    <property type="entry name" value="SMALL RIBOSOMAL SUBUNIT PROTEIN BS18M"/>
    <property type="match status" value="1"/>
</dbReference>
<dbReference type="Pfam" id="PF01084">
    <property type="entry name" value="Ribosomal_S18"/>
    <property type="match status" value="1"/>
</dbReference>
<dbReference type="PRINTS" id="PR00974">
    <property type="entry name" value="RIBOSOMALS18"/>
</dbReference>
<dbReference type="SUPFAM" id="SSF46911">
    <property type="entry name" value="Ribosomal protein S18"/>
    <property type="match status" value="1"/>
</dbReference>
<dbReference type="PROSITE" id="PS00057">
    <property type="entry name" value="RIBOSOMAL_S18"/>
    <property type="match status" value="1"/>
</dbReference>
<comment type="function">
    <text evidence="1">Binds as a heterodimer with protein bS6 to the central domain of the 16S rRNA, where it helps stabilize the platform of the 30S subunit.</text>
</comment>
<comment type="subunit">
    <text evidence="1">Part of the 30S ribosomal subunit. Forms a tight heterodimer with protein bS6.</text>
</comment>
<comment type="similarity">
    <text evidence="1">Belongs to the bacterial ribosomal protein bS18 family.</text>
</comment>
<evidence type="ECO:0000255" key="1">
    <source>
        <dbReference type="HAMAP-Rule" id="MF_00270"/>
    </source>
</evidence>
<evidence type="ECO:0000305" key="2"/>
<proteinExistence type="inferred from homology"/>
<sequence length="80" mass="9322">MAGGPRRGGRRRKKVCYFTANGITHIDYKDTELLKRFISERGKILPRRVTGTSAKYQRMLTLAIKRSRHMALLPYVKEEQ</sequence>
<organism>
    <name type="scientific">Staphylococcus saprophyticus subsp. saprophyticus (strain ATCC 15305 / DSM 20229 / NCIMB 8711 / NCTC 7292 / S-41)</name>
    <dbReference type="NCBI Taxonomy" id="342451"/>
    <lineage>
        <taxon>Bacteria</taxon>
        <taxon>Bacillati</taxon>
        <taxon>Bacillota</taxon>
        <taxon>Bacilli</taxon>
        <taxon>Bacillales</taxon>
        <taxon>Staphylococcaceae</taxon>
        <taxon>Staphylococcus</taxon>
    </lineage>
</organism>
<feature type="chain" id="PRO_1000003623" description="Small ribosomal subunit protein bS18">
    <location>
        <begin position="1"/>
        <end position="80"/>
    </location>
</feature>
<accession>Q49UQ2</accession>
<name>RS18_STAS1</name>